<protein>
    <recommendedName>
        <fullName evidence="1">Urease accessory protein UreG</fullName>
    </recommendedName>
</protein>
<organism>
    <name type="scientific">Pseudomonas aeruginosa (strain LESB58)</name>
    <dbReference type="NCBI Taxonomy" id="557722"/>
    <lineage>
        <taxon>Bacteria</taxon>
        <taxon>Pseudomonadati</taxon>
        <taxon>Pseudomonadota</taxon>
        <taxon>Gammaproteobacteria</taxon>
        <taxon>Pseudomonadales</taxon>
        <taxon>Pseudomonadaceae</taxon>
        <taxon>Pseudomonas</taxon>
    </lineage>
</organism>
<dbReference type="EMBL" id="FM209186">
    <property type="protein sequence ID" value="CAW30033.1"/>
    <property type="molecule type" value="Genomic_DNA"/>
</dbReference>
<dbReference type="RefSeq" id="WP_003095530.1">
    <property type="nucleotide sequence ID" value="NC_011770.1"/>
</dbReference>
<dbReference type="SMR" id="B7V1V6"/>
<dbReference type="KEGG" id="pag:PLES_52791"/>
<dbReference type="HOGENOM" id="CLU_072144_1_0_6"/>
<dbReference type="GO" id="GO:0005737">
    <property type="term" value="C:cytoplasm"/>
    <property type="evidence" value="ECO:0007669"/>
    <property type="project" value="UniProtKB-SubCell"/>
</dbReference>
<dbReference type="GO" id="GO:0016887">
    <property type="term" value="F:ATP hydrolysis activity"/>
    <property type="evidence" value="ECO:0007669"/>
    <property type="project" value="InterPro"/>
</dbReference>
<dbReference type="GO" id="GO:0005525">
    <property type="term" value="F:GTP binding"/>
    <property type="evidence" value="ECO:0007669"/>
    <property type="project" value="UniProtKB-KW"/>
</dbReference>
<dbReference type="GO" id="GO:0003924">
    <property type="term" value="F:GTPase activity"/>
    <property type="evidence" value="ECO:0007669"/>
    <property type="project" value="InterPro"/>
</dbReference>
<dbReference type="GO" id="GO:0016151">
    <property type="term" value="F:nickel cation binding"/>
    <property type="evidence" value="ECO:0007669"/>
    <property type="project" value="UniProtKB-UniRule"/>
</dbReference>
<dbReference type="GO" id="GO:0043419">
    <property type="term" value="P:urea catabolic process"/>
    <property type="evidence" value="ECO:0007669"/>
    <property type="project" value="InterPro"/>
</dbReference>
<dbReference type="CDD" id="cd05540">
    <property type="entry name" value="UreG"/>
    <property type="match status" value="1"/>
</dbReference>
<dbReference type="FunFam" id="3.40.50.300:FF:000208">
    <property type="entry name" value="Urease accessory protein UreG"/>
    <property type="match status" value="1"/>
</dbReference>
<dbReference type="Gene3D" id="3.40.50.300">
    <property type="entry name" value="P-loop containing nucleotide triphosphate hydrolases"/>
    <property type="match status" value="1"/>
</dbReference>
<dbReference type="HAMAP" id="MF_01389">
    <property type="entry name" value="UreG"/>
    <property type="match status" value="1"/>
</dbReference>
<dbReference type="InterPro" id="IPR003593">
    <property type="entry name" value="AAA+_ATPase"/>
</dbReference>
<dbReference type="InterPro" id="IPR003495">
    <property type="entry name" value="CobW/HypB/UreG_nucleotide-bd"/>
</dbReference>
<dbReference type="InterPro" id="IPR027417">
    <property type="entry name" value="P-loop_NTPase"/>
</dbReference>
<dbReference type="InterPro" id="IPR004400">
    <property type="entry name" value="UreG"/>
</dbReference>
<dbReference type="NCBIfam" id="TIGR00101">
    <property type="entry name" value="ureG"/>
    <property type="match status" value="1"/>
</dbReference>
<dbReference type="PANTHER" id="PTHR31715">
    <property type="entry name" value="UREASE ACCESSORY PROTEIN G"/>
    <property type="match status" value="1"/>
</dbReference>
<dbReference type="PANTHER" id="PTHR31715:SF0">
    <property type="entry name" value="UREASE ACCESSORY PROTEIN G"/>
    <property type="match status" value="1"/>
</dbReference>
<dbReference type="Pfam" id="PF02492">
    <property type="entry name" value="cobW"/>
    <property type="match status" value="1"/>
</dbReference>
<dbReference type="PIRSF" id="PIRSF005624">
    <property type="entry name" value="Ni-bind_GTPase"/>
    <property type="match status" value="1"/>
</dbReference>
<dbReference type="SMART" id="SM00382">
    <property type="entry name" value="AAA"/>
    <property type="match status" value="1"/>
</dbReference>
<dbReference type="SUPFAM" id="SSF52540">
    <property type="entry name" value="P-loop containing nucleoside triphosphate hydrolases"/>
    <property type="match status" value="1"/>
</dbReference>
<accession>B7V1V6</accession>
<reference key="1">
    <citation type="journal article" date="2009" name="Genome Res.">
        <title>Newly introduced genomic prophage islands are critical determinants of in vivo competitiveness in the Liverpool epidemic strain of Pseudomonas aeruginosa.</title>
        <authorList>
            <person name="Winstanley C."/>
            <person name="Langille M.G.I."/>
            <person name="Fothergill J.L."/>
            <person name="Kukavica-Ibrulj I."/>
            <person name="Paradis-Bleau C."/>
            <person name="Sanschagrin F."/>
            <person name="Thomson N.R."/>
            <person name="Winsor G.L."/>
            <person name="Quail M.A."/>
            <person name="Lennard N."/>
            <person name="Bignell A."/>
            <person name="Clarke L."/>
            <person name="Seeger K."/>
            <person name="Saunders D."/>
            <person name="Harris D."/>
            <person name="Parkhill J."/>
            <person name="Hancock R.E.W."/>
            <person name="Brinkman F.S.L."/>
            <person name="Levesque R.C."/>
        </authorList>
    </citation>
    <scope>NUCLEOTIDE SEQUENCE [LARGE SCALE GENOMIC DNA]</scope>
    <source>
        <strain>LESB58</strain>
    </source>
</reference>
<keyword id="KW-0143">Chaperone</keyword>
<keyword id="KW-0963">Cytoplasm</keyword>
<keyword id="KW-0342">GTP-binding</keyword>
<keyword id="KW-0996">Nickel insertion</keyword>
<keyword id="KW-0547">Nucleotide-binding</keyword>
<feature type="chain" id="PRO_1000145204" description="Urease accessory protein UreG">
    <location>
        <begin position="1"/>
        <end position="204"/>
    </location>
</feature>
<feature type="binding site" evidence="1">
    <location>
        <begin position="12"/>
        <end position="19"/>
    </location>
    <ligand>
        <name>GTP</name>
        <dbReference type="ChEBI" id="CHEBI:37565"/>
    </ligand>
</feature>
<comment type="function">
    <text evidence="1">Facilitates the functional incorporation of the urease nickel metallocenter. This process requires GTP hydrolysis, probably effectuated by UreG.</text>
</comment>
<comment type="subunit">
    <text evidence="1">Homodimer. UreD, UreF and UreG form a complex that acts as a GTP-hydrolysis-dependent molecular chaperone, activating the urease apoprotein by helping to assemble the nickel containing metallocenter of UreC. The UreE protein probably delivers the nickel.</text>
</comment>
<comment type="subcellular location">
    <subcellularLocation>
        <location evidence="1">Cytoplasm</location>
    </subcellularLocation>
</comment>
<comment type="similarity">
    <text evidence="1">Belongs to the SIMIBI class G3E GTPase family. UreG subfamily.</text>
</comment>
<sequence length="204" mass="21991">MTSQPLRVGIGGPVGSGKTALTLALCRELRERYNLAVVTNDIYTQEDAEFLVRNEALAPERIIGVETGGCPHTAIREDASINLEAVDQLNRRFPGLELILVESGGDNLSATFSPELSDLTLYVIDVSAGDKIPRKGGPGICKSDLLVINKIDLAPLVGASLDVMDRDARRMRGDKPFVFSNQKTGQGLDEIIAFIERQGLLTAA</sequence>
<gene>
    <name evidence="1" type="primary">ureG</name>
    <name type="ordered locus">PLES_52791</name>
</gene>
<evidence type="ECO:0000255" key="1">
    <source>
        <dbReference type="HAMAP-Rule" id="MF_01389"/>
    </source>
</evidence>
<name>UREG_PSEA8</name>
<proteinExistence type="inferred from homology"/>